<dbReference type="EMBL" id="CP001098">
    <property type="protein sequence ID" value="ACL69474.1"/>
    <property type="molecule type" value="Genomic_DNA"/>
</dbReference>
<dbReference type="RefSeq" id="WP_012635662.1">
    <property type="nucleotide sequence ID" value="NC_011899.1"/>
</dbReference>
<dbReference type="SMR" id="B8CW05"/>
<dbReference type="STRING" id="373903.Hore_07170"/>
<dbReference type="KEGG" id="hor:Hore_07170"/>
<dbReference type="eggNOG" id="COG1354">
    <property type="taxonomic scope" value="Bacteria"/>
</dbReference>
<dbReference type="HOGENOM" id="CLU_038686_3_1_9"/>
<dbReference type="OrthoDB" id="9811016at2"/>
<dbReference type="Proteomes" id="UP000000719">
    <property type="component" value="Chromosome"/>
</dbReference>
<dbReference type="GO" id="GO:0005737">
    <property type="term" value="C:cytoplasm"/>
    <property type="evidence" value="ECO:0007669"/>
    <property type="project" value="UniProtKB-SubCell"/>
</dbReference>
<dbReference type="GO" id="GO:0051301">
    <property type="term" value="P:cell division"/>
    <property type="evidence" value="ECO:0007669"/>
    <property type="project" value="UniProtKB-KW"/>
</dbReference>
<dbReference type="GO" id="GO:0007059">
    <property type="term" value="P:chromosome segregation"/>
    <property type="evidence" value="ECO:0007669"/>
    <property type="project" value="UniProtKB-UniRule"/>
</dbReference>
<dbReference type="GO" id="GO:0006260">
    <property type="term" value="P:DNA replication"/>
    <property type="evidence" value="ECO:0007669"/>
    <property type="project" value="UniProtKB-UniRule"/>
</dbReference>
<dbReference type="Gene3D" id="6.10.250.2410">
    <property type="match status" value="1"/>
</dbReference>
<dbReference type="Gene3D" id="1.10.10.580">
    <property type="entry name" value="Structural maintenance of chromosome 1. Chain E"/>
    <property type="match status" value="1"/>
</dbReference>
<dbReference type="HAMAP" id="MF_01805">
    <property type="entry name" value="ScpA"/>
    <property type="match status" value="1"/>
</dbReference>
<dbReference type="InterPro" id="IPR003768">
    <property type="entry name" value="ScpA"/>
</dbReference>
<dbReference type="InterPro" id="IPR023093">
    <property type="entry name" value="ScpA-like_C"/>
</dbReference>
<dbReference type="PANTHER" id="PTHR33969">
    <property type="entry name" value="SEGREGATION AND CONDENSATION PROTEIN A"/>
    <property type="match status" value="1"/>
</dbReference>
<dbReference type="PANTHER" id="PTHR33969:SF2">
    <property type="entry name" value="SEGREGATION AND CONDENSATION PROTEIN A"/>
    <property type="match status" value="1"/>
</dbReference>
<dbReference type="Pfam" id="PF02616">
    <property type="entry name" value="SMC_ScpA"/>
    <property type="match status" value="1"/>
</dbReference>
<sequence>MYEVQLDKFQGPLELLYQLVKKNKIEISEISLARITEQYLEYIEHYRDFNLEMASEFMVIASELIELKVKSLLPDSEEDSTEEEKGKTIVQRLKDYHVFKKVTELFREYEKAAGQIYSKPVNLDKYVDNEVNYEIDIDISELVEAFKKAMSSTDGVEVFEGDRNLKKIESEEIKIQDKMDQILELFNQNPDQGLTFSQLVSGNPSKMEIVVTFLSILELTKLRKIEIKQEKLFSDINLRSKAG</sequence>
<accession>B8CW05</accession>
<gene>
    <name evidence="1" type="primary">scpA</name>
    <name type="ordered locus">Hore_07170</name>
</gene>
<feature type="chain" id="PRO_1000187563" description="Segregation and condensation protein A">
    <location>
        <begin position="1"/>
        <end position="243"/>
    </location>
</feature>
<comment type="function">
    <text evidence="1">Participates in chromosomal partition during cell division. May act via the formation of a condensin-like complex containing Smc and ScpB that pull DNA away from mid-cell into both cell halves.</text>
</comment>
<comment type="subunit">
    <text evidence="1">Component of a cohesin-like complex composed of ScpA, ScpB and the Smc homodimer, in which ScpA and ScpB bind to the head domain of Smc. The presence of the three proteins is required for the association of the complex with DNA.</text>
</comment>
<comment type="subcellular location">
    <subcellularLocation>
        <location evidence="1">Cytoplasm</location>
    </subcellularLocation>
    <text evidence="1">Associated with two foci at the outer edges of the nucleoid region in young cells, and at four foci within both cell halves in older cells.</text>
</comment>
<comment type="similarity">
    <text evidence="1">Belongs to the ScpA family.</text>
</comment>
<organism>
    <name type="scientific">Halothermothrix orenii (strain H 168 / OCM 544 / DSM 9562)</name>
    <dbReference type="NCBI Taxonomy" id="373903"/>
    <lineage>
        <taxon>Bacteria</taxon>
        <taxon>Bacillati</taxon>
        <taxon>Bacillota</taxon>
        <taxon>Clostridia</taxon>
        <taxon>Halanaerobiales</taxon>
        <taxon>Halothermotrichaceae</taxon>
        <taxon>Halothermothrix</taxon>
    </lineage>
</organism>
<evidence type="ECO:0000255" key="1">
    <source>
        <dbReference type="HAMAP-Rule" id="MF_01805"/>
    </source>
</evidence>
<protein>
    <recommendedName>
        <fullName evidence="1">Segregation and condensation protein A</fullName>
    </recommendedName>
</protein>
<proteinExistence type="inferred from homology"/>
<keyword id="KW-0131">Cell cycle</keyword>
<keyword id="KW-0132">Cell division</keyword>
<keyword id="KW-0159">Chromosome partition</keyword>
<keyword id="KW-0963">Cytoplasm</keyword>
<keyword id="KW-1185">Reference proteome</keyword>
<name>SCPA_HALOH</name>
<reference key="1">
    <citation type="journal article" date="2009" name="PLoS ONE">
        <title>Genome analysis of the anaerobic thermohalophilic bacterium Halothermothrix orenii.</title>
        <authorList>
            <person name="Mavromatis K."/>
            <person name="Ivanova N."/>
            <person name="Anderson I."/>
            <person name="Lykidis A."/>
            <person name="Hooper S.D."/>
            <person name="Sun H."/>
            <person name="Kunin V."/>
            <person name="Lapidus A."/>
            <person name="Hugenholtz P."/>
            <person name="Patel B."/>
            <person name="Kyrpides N.C."/>
        </authorList>
    </citation>
    <scope>NUCLEOTIDE SEQUENCE [LARGE SCALE GENOMIC DNA]</scope>
    <source>
        <strain>H 168 / OCM 544 / DSM 9562</strain>
    </source>
</reference>